<reference key="1">
    <citation type="submission" date="2006-05" db="EMBL/GenBank/DDBJ databases">
        <title>Complete sequence of chromosome of Silicibacter sp. TM1040.</title>
        <authorList>
            <consortium name="US DOE Joint Genome Institute"/>
            <person name="Copeland A."/>
            <person name="Lucas S."/>
            <person name="Lapidus A."/>
            <person name="Barry K."/>
            <person name="Detter J.C."/>
            <person name="Glavina del Rio T."/>
            <person name="Hammon N."/>
            <person name="Israni S."/>
            <person name="Dalin E."/>
            <person name="Tice H."/>
            <person name="Pitluck S."/>
            <person name="Brettin T."/>
            <person name="Bruce D."/>
            <person name="Han C."/>
            <person name="Tapia R."/>
            <person name="Goodwin L."/>
            <person name="Thompson L.S."/>
            <person name="Gilna P."/>
            <person name="Schmutz J."/>
            <person name="Larimer F."/>
            <person name="Land M."/>
            <person name="Hauser L."/>
            <person name="Kyrpides N."/>
            <person name="Kim E."/>
            <person name="Belas R."/>
            <person name="Moran M.A."/>
            <person name="Buchan A."/>
            <person name="Gonzalez J.M."/>
            <person name="Schell M.A."/>
            <person name="Sun F."/>
            <person name="Richardson P."/>
        </authorList>
    </citation>
    <scope>NUCLEOTIDE SEQUENCE [LARGE SCALE GENOMIC DNA]</scope>
    <source>
        <strain>TM1040</strain>
    </source>
</reference>
<evidence type="ECO:0000255" key="1">
    <source>
        <dbReference type="HAMAP-Rule" id="MF_00435"/>
    </source>
</evidence>
<evidence type="ECO:0000255" key="2">
    <source>
        <dbReference type="PROSITE-ProRule" id="PRU01197"/>
    </source>
</evidence>
<evidence type="ECO:0000255" key="3">
    <source>
        <dbReference type="PROSITE-ProRule" id="PRU01198"/>
    </source>
</evidence>
<proteinExistence type="inferred from homology"/>
<accession>Q1GE81</accession>
<feature type="chain" id="PRO_0000252787" description="Ketol-acid reductoisomerase (NADP(+))">
    <location>
        <begin position="1"/>
        <end position="340"/>
    </location>
</feature>
<feature type="domain" description="KARI N-terminal Rossmann" evidence="2">
    <location>
        <begin position="1"/>
        <end position="182"/>
    </location>
</feature>
<feature type="domain" description="KARI C-terminal knotted" evidence="3">
    <location>
        <begin position="183"/>
        <end position="329"/>
    </location>
</feature>
<feature type="active site" evidence="1">
    <location>
        <position position="108"/>
    </location>
</feature>
<feature type="binding site" evidence="1">
    <location>
        <begin position="24"/>
        <end position="27"/>
    </location>
    <ligand>
        <name>NADP(+)</name>
        <dbReference type="ChEBI" id="CHEBI:58349"/>
    </ligand>
</feature>
<feature type="binding site" evidence="1">
    <location>
        <position position="48"/>
    </location>
    <ligand>
        <name>NADP(+)</name>
        <dbReference type="ChEBI" id="CHEBI:58349"/>
    </ligand>
</feature>
<feature type="binding site" evidence="1">
    <location>
        <position position="51"/>
    </location>
    <ligand>
        <name>NADP(+)</name>
        <dbReference type="ChEBI" id="CHEBI:58349"/>
    </ligand>
</feature>
<feature type="binding site" evidence="1">
    <location>
        <position position="53"/>
    </location>
    <ligand>
        <name>NADP(+)</name>
        <dbReference type="ChEBI" id="CHEBI:58349"/>
    </ligand>
</feature>
<feature type="binding site" evidence="1">
    <location>
        <begin position="83"/>
        <end position="86"/>
    </location>
    <ligand>
        <name>NADP(+)</name>
        <dbReference type="ChEBI" id="CHEBI:58349"/>
    </ligand>
</feature>
<feature type="binding site" evidence="1">
    <location>
        <position position="134"/>
    </location>
    <ligand>
        <name>NADP(+)</name>
        <dbReference type="ChEBI" id="CHEBI:58349"/>
    </ligand>
</feature>
<feature type="binding site" evidence="1">
    <location>
        <position position="191"/>
    </location>
    <ligand>
        <name>Mg(2+)</name>
        <dbReference type="ChEBI" id="CHEBI:18420"/>
        <label>1</label>
    </ligand>
</feature>
<feature type="binding site" evidence="1">
    <location>
        <position position="191"/>
    </location>
    <ligand>
        <name>Mg(2+)</name>
        <dbReference type="ChEBI" id="CHEBI:18420"/>
        <label>2</label>
    </ligand>
</feature>
<feature type="binding site" evidence="1">
    <location>
        <position position="195"/>
    </location>
    <ligand>
        <name>Mg(2+)</name>
        <dbReference type="ChEBI" id="CHEBI:18420"/>
        <label>1</label>
    </ligand>
</feature>
<feature type="binding site" evidence="1">
    <location>
        <position position="227"/>
    </location>
    <ligand>
        <name>Mg(2+)</name>
        <dbReference type="ChEBI" id="CHEBI:18420"/>
        <label>2</label>
    </ligand>
</feature>
<feature type="binding site" evidence="1">
    <location>
        <position position="231"/>
    </location>
    <ligand>
        <name>Mg(2+)</name>
        <dbReference type="ChEBI" id="CHEBI:18420"/>
        <label>2</label>
    </ligand>
</feature>
<feature type="binding site" evidence="1">
    <location>
        <position position="252"/>
    </location>
    <ligand>
        <name>substrate</name>
    </ligand>
</feature>
<sequence>MRVYYDRDCDVNLIKEKKVAILGYGSQGHAHALNLRDSGAKNLVIALREGSPSAKKAEAEGLQVMGIAEAAAWCDVIMFTMPDELQAETYKKYVHDNIKPGAAIAFAHGLNVHFGLIEPKEGVDVIMMAPKGPGHTVRGEYTKGGGVPCLVAVHNDASGSALETALSYCSAIGGGRSGIIETNFREECETDLFGEQAVLCGGLVELIRCGFETLVEAGYAPEMAYFECLHEVKLIVDLIYEGGIANMDYSISNTAEYGQYVTGPRILKYDETKARMKEVLADIQQGKFVRDFMLENAVGQPTIKASRRANDEHAIEATGAKLREMMPWISAGKMVDKSKN</sequence>
<dbReference type="EC" id="1.1.1.86" evidence="1"/>
<dbReference type="EMBL" id="CP000377">
    <property type="protein sequence ID" value="ABF65035.1"/>
    <property type="molecule type" value="Genomic_DNA"/>
</dbReference>
<dbReference type="RefSeq" id="WP_005632920.1">
    <property type="nucleotide sequence ID" value="NC_008044.1"/>
</dbReference>
<dbReference type="SMR" id="Q1GE81"/>
<dbReference type="STRING" id="292414.TM1040_2303"/>
<dbReference type="GeneID" id="28248638"/>
<dbReference type="KEGG" id="sit:TM1040_2303"/>
<dbReference type="eggNOG" id="COG0059">
    <property type="taxonomic scope" value="Bacteria"/>
</dbReference>
<dbReference type="HOGENOM" id="CLU_033821_0_1_5"/>
<dbReference type="OrthoDB" id="9804088at2"/>
<dbReference type="UniPathway" id="UPA00047">
    <property type="reaction ID" value="UER00056"/>
</dbReference>
<dbReference type="UniPathway" id="UPA00049">
    <property type="reaction ID" value="UER00060"/>
</dbReference>
<dbReference type="Proteomes" id="UP000000636">
    <property type="component" value="Chromosome"/>
</dbReference>
<dbReference type="GO" id="GO:0005829">
    <property type="term" value="C:cytosol"/>
    <property type="evidence" value="ECO:0007669"/>
    <property type="project" value="TreeGrafter"/>
</dbReference>
<dbReference type="GO" id="GO:0004455">
    <property type="term" value="F:ketol-acid reductoisomerase activity"/>
    <property type="evidence" value="ECO:0007669"/>
    <property type="project" value="UniProtKB-UniRule"/>
</dbReference>
<dbReference type="GO" id="GO:0000287">
    <property type="term" value="F:magnesium ion binding"/>
    <property type="evidence" value="ECO:0007669"/>
    <property type="project" value="UniProtKB-UniRule"/>
</dbReference>
<dbReference type="GO" id="GO:0050661">
    <property type="term" value="F:NADP binding"/>
    <property type="evidence" value="ECO:0007669"/>
    <property type="project" value="InterPro"/>
</dbReference>
<dbReference type="GO" id="GO:0009097">
    <property type="term" value="P:isoleucine biosynthetic process"/>
    <property type="evidence" value="ECO:0007669"/>
    <property type="project" value="UniProtKB-UniRule"/>
</dbReference>
<dbReference type="GO" id="GO:0009099">
    <property type="term" value="P:L-valine biosynthetic process"/>
    <property type="evidence" value="ECO:0007669"/>
    <property type="project" value="UniProtKB-UniRule"/>
</dbReference>
<dbReference type="FunFam" id="3.40.50.720:FF:000023">
    <property type="entry name" value="Ketol-acid reductoisomerase (NADP(+))"/>
    <property type="match status" value="1"/>
</dbReference>
<dbReference type="Gene3D" id="6.10.240.10">
    <property type="match status" value="1"/>
</dbReference>
<dbReference type="Gene3D" id="3.40.50.720">
    <property type="entry name" value="NAD(P)-binding Rossmann-like Domain"/>
    <property type="match status" value="1"/>
</dbReference>
<dbReference type="HAMAP" id="MF_00435">
    <property type="entry name" value="IlvC"/>
    <property type="match status" value="1"/>
</dbReference>
<dbReference type="InterPro" id="IPR008927">
    <property type="entry name" value="6-PGluconate_DH-like_C_sf"/>
</dbReference>
<dbReference type="InterPro" id="IPR013023">
    <property type="entry name" value="KARI"/>
</dbReference>
<dbReference type="InterPro" id="IPR000506">
    <property type="entry name" value="KARI_C"/>
</dbReference>
<dbReference type="InterPro" id="IPR013116">
    <property type="entry name" value="KARI_N"/>
</dbReference>
<dbReference type="InterPro" id="IPR014359">
    <property type="entry name" value="KARI_prok"/>
</dbReference>
<dbReference type="InterPro" id="IPR036291">
    <property type="entry name" value="NAD(P)-bd_dom_sf"/>
</dbReference>
<dbReference type="NCBIfam" id="TIGR00465">
    <property type="entry name" value="ilvC"/>
    <property type="match status" value="1"/>
</dbReference>
<dbReference type="NCBIfam" id="NF004017">
    <property type="entry name" value="PRK05479.1"/>
    <property type="match status" value="1"/>
</dbReference>
<dbReference type="NCBIfam" id="NF009940">
    <property type="entry name" value="PRK13403.1"/>
    <property type="match status" value="1"/>
</dbReference>
<dbReference type="PANTHER" id="PTHR21371">
    <property type="entry name" value="KETOL-ACID REDUCTOISOMERASE, MITOCHONDRIAL"/>
    <property type="match status" value="1"/>
</dbReference>
<dbReference type="PANTHER" id="PTHR21371:SF1">
    <property type="entry name" value="KETOL-ACID REDUCTOISOMERASE, MITOCHONDRIAL"/>
    <property type="match status" value="1"/>
</dbReference>
<dbReference type="Pfam" id="PF01450">
    <property type="entry name" value="KARI_C"/>
    <property type="match status" value="1"/>
</dbReference>
<dbReference type="Pfam" id="PF07991">
    <property type="entry name" value="KARI_N"/>
    <property type="match status" value="1"/>
</dbReference>
<dbReference type="PIRSF" id="PIRSF000116">
    <property type="entry name" value="IlvC_gammaproteo"/>
    <property type="match status" value="1"/>
</dbReference>
<dbReference type="SUPFAM" id="SSF48179">
    <property type="entry name" value="6-phosphogluconate dehydrogenase C-terminal domain-like"/>
    <property type="match status" value="1"/>
</dbReference>
<dbReference type="SUPFAM" id="SSF51735">
    <property type="entry name" value="NAD(P)-binding Rossmann-fold domains"/>
    <property type="match status" value="1"/>
</dbReference>
<dbReference type="PROSITE" id="PS51851">
    <property type="entry name" value="KARI_C"/>
    <property type="match status" value="1"/>
</dbReference>
<dbReference type="PROSITE" id="PS51850">
    <property type="entry name" value="KARI_N"/>
    <property type="match status" value="1"/>
</dbReference>
<keyword id="KW-0028">Amino-acid biosynthesis</keyword>
<keyword id="KW-0100">Branched-chain amino acid biosynthesis</keyword>
<keyword id="KW-0460">Magnesium</keyword>
<keyword id="KW-0479">Metal-binding</keyword>
<keyword id="KW-0521">NADP</keyword>
<keyword id="KW-0560">Oxidoreductase</keyword>
<keyword id="KW-1185">Reference proteome</keyword>
<gene>
    <name evidence="1" type="primary">ilvC</name>
    <name type="ordered locus">TM1040_2303</name>
</gene>
<name>ILVC_RUEST</name>
<comment type="function">
    <text evidence="1">Involved in the biosynthesis of branched-chain amino acids (BCAA). Catalyzes an alkyl-migration followed by a ketol-acid reduction of (S)-2-acetolactate (S2AL) to yield (R)-2,3-dihydroxy-isovalerate. In the isomerase reaction, S2AL is rearranged via a Mg-dependent methyl migration to produce 3-hydroxy-3-methyl-2-ketobutyrate (HMKB). In the reductase reaction, this 2-ketoacid undergoes a metal-dependent reduction by NADPH to yield (R)-2,3-dihydroxy-isovalerate.</text>
</comment>
<comment type="catalytic activity">
    <reaction evidence="1">
        <text>(2R)-2,3-dihydroxy-3-methylbutanoate + NADP(+) = (2S)-2-acetolactate + NADPH + H(+)</text>
        <dbReference type="Rhea" id="RHEA:22068"/>
        <dbReference type="ChEBI" id="CHEBI:15378"/>
        <dbReference type="ChEBI" id="CHEBI:49072"/>
        <dbReference type="ChEBI" id="CHEBI:57783"/>
        <dbReference type="ChEBI" id="CHEBI:58349"/>
        <dbReference type="ChEBI" id="CHEBI:58476"/>
        <dbReference type="EC" id="1.1.1.86"/>
    </reaction>
</comment>
<comment type="catalytic activity">
    <reaction evidence="1">
        <text>(2R,3R)-2,3-dihydroxy-3-methylpentanoate + NADP(+) = (S)-2-ethyl-2-hydroxy-3-oxobutanoate + NADPH + H(+)</text>
        <dbReference type="Rhea" id="RHEA:13493"/>
        <dbReference type="ChEBI" id="CHEBI:15378"/>
        <dbReference type="ChEBI" id="CHEBI:49256"/>
        <dbReference type="ChEBI" id="CHEBI:49258"/>
        <dbReference type="ChEBI" id="CHEBI:57783"/>
        <dbReference type="ChEBI" id="CHEBI:58349"/>
        <dbReference type="EC" id="1.1.1.86"/>
    </reaction>
</comment>
<comment type="cofactor">
    <cofactor evidence="1">
        <name>Mg(2+)</name>
        <dbReference type="ChEBI" id="CHEBI:18420"/>
    </cofactor>
    <text evidence="1">Binds 2 magnesium ions per subunit.</text>
</comment>
<comment type="pathway">
    <text evidence="1">Amino-acid biosynthesis; L-isoleucine biosynthesis; L-isoleucine from 2-oxobutanoate: step 2/4.</text>
</comment>
<comment type="pathway">
    <text evidence="1">Amino-acid biosynthesis; L-valine biosynthesis; L-valine from pyruvate: step 2/4.</text>
</comment>
<comment type="similarity">
    <text evidence="1">Belongs to the ketol-acid reductoisomerase family.</text>
</comment>
<organism>
    <name type="scientific">Ruegeria sp. (strain TM1040)</name>
    <name type="common">Silicibacter sp.</name>
    <dbReference type="NCBI Taxonomy" id="292414"/>
    <lineage>
        <taxon>Bacteria</taxon>
        <taxon>Pseudomonadati</taxon>
        <taxon>Pseudomonadota</taxon>
        <taxon>Alphaproteobacteria</taxon>
        <taxon>Rhodobacterales</taxon>
        <taxon>Roseobacteraceae</taxon>
        <taxon>Ruegeria</taxon>
    </lineage>
</organism>
<protein>
    <recommendedName>
        <fullName evidence="1">Ketol-acid reductoisomerase (NADP(+))</fullName>
        <shortName evidence="1">KARI</shortName>
        <ecNumber evidence="1">1.1.1.86</ecNumber>
    </recommendedName>
    <alternativeName>
        <fullName evidence="1">Acetohydroxy-acid isomeroreductase</fullName>
        <shortName evidence="1">AHIR</shortName>
    </alternativeName>
    <alternativeName>
        <fullName evidence="1">Alpha-keto-beta-hydroxylacyl reductoisomerase</fullName>
    </alternativeName>
    <alternativeName>
        <fullName evidence="1">Ketol-acid reductoisomerase type 1</fullName>
    </alternativeName>
    <alternativeName>
        <fullName evidence="1">Ketol-acid reductoisomerase type I</fullName>
    </alternativeName>
</protein>